<sequence length="512" mass="53417">MTQSALHTEFGGIAALRDALARRQVSAVELAQSGLDAAQAASGLNAFLHIDPDLTLAQARAADAALAAGTAGPLAGIPIAHKDAFVTRGWRTTAGSKMLAGYASPFDATVVERLAEAGAVSLGKLNCDEFAMGSGNENSAYGPVRNPWDTQAVPGGSSGGSAAAVAARLVAAATGTDTGGSVRQPAALCGVSGIKPTYGTVSRYGIIAFGSSLDQAGPLAPSSRDLLELLDVMTGFDPRDATSLQACDGQANESGRVRRGHDAAQAGYDAAGSQPLKGLRIGVPQEYFGAGLAPDVAAAVEAALAQFEQLGAVRVPVSLPRTELAIPAYYVIAPAEASSNLARYDGVRYGHRAAQYGDLNEMISRSRAEGFGDEVKRRILIGTYVLSHGYYDAYYLQAQRLRRLIAQDFQRAFAGQCDVIMGPVSPTVAKNIGDNRDDPTADWLADVYTLGVSLAGLPAMSVPCGFGGQDGRRPVGLQIIGNYFDEGRLLALADRYQQVTDWHQRAPVSQDA</sequence>
<evidence type="ECO:0000255" key="1">
    <source>
        <dbReference type="HAMAP-Rule" id="MF_00120"/>
    </source>
</evidence>
<accession>Q7VSN2</accession>
<proteinExistence type="inferred from homology"/>
<dbReference type="EC" id="6.3.5.7" evidence="1"/>
<dbReference type="EMBL" id="BX640412">
    <property type="protein sequence ID" value="CAE44704.1"/>
    <property type="molecule type" value="Genomic_DNA"/>
</dbReference>
<dbReference type="RefSeq" id="NP_879244.1">
    <property type="nucleotide sequence ID" value="NC_002929.2"/>
</dbReference>
<dbReference type="RefSeq" id="WP_010929771.1">
    <property type="nucleotide sequence ID" value="NZ_CP039022.1"/>
</dbReference>
<dbReference type="SMR" id="Q7VSN2"/>
<dbReference type="STRING" id="257313.BP0372"/>
<dbReference type="PaxDb" id="257313-BP0372"/>
<dbReference type="GeneID" id="69603375"/>
<dbReference type="KEGG" id="bpe:BP0372"/>
<dbReference type="PATRIC" id="fig|257313.5.peg.402"/>
<dbReference type="eggNOG" id="COG0154">
    <property type="taxonomic scope" value="Bacteria"/>
</dbReference>
<dbReference type="HOGENOM" id="CLU_009600_0_3_4"/>
<dbReference type="Proteomes" id="UP000002676">
    <property type="component" value="Chromosome"/>
</dbReference>
<dbReference type="GO" id="GO:0030956">
    <property type="term" value="C:glutamyl-tRNA(Gln) amidotransferase complex"/>
    <property type="evidence" value="ECO:0007669"/>
    <property type="project" value="InterPro"/>
</dbReference>
<dbReference type="GO" id="GO:0005524">
    <property type="term" value="F:ATP binding"/>
    <property type="evidence" value="ECO:0007669"/>
    <property type="project" value="UniProtKB-KW"/>
</dbReference>
<dbReference type="GO" id="GO:0050567">
    <property type="term" value="F:glutaminyl-tRNA synthase (glutamine-hydrolyzing) activity"/>
    <property type="evidence" value="ECO:0007669"/>
    <property type="project" value="UniProtKB-UniRule"/>
</dbReference>
<dbReference type="GO" id="GO:0006412">
    <property type="term" value="P:translation"/>
    <property type="evidence" value="ECO:0007669"/>
    <property type="project" value="UniProtKB-UniRule"/>
</dbReference>
<dbReference type="Gene3D" id="3.90.1300.10">
    <property type="entry name" value="Amidase signature (AS) domain"/>
    <property type="match status" value="1"/>
</dbReference>
<dbReference type="HAMAP" id="MF_00120">
    <property type="entry name" value="GatA"/>
    <property type="match status" value="1"/>
</dbReference>
<dbReference type="InterPro" id="IPR000120">
    <property type="entry name" value="Amidase"/>
</dbReference>
<dbReference type="InterPro" id="IPR020556">
    <property type="entry name" value="Amidase_CS"/>
</dbReference>
<dbReference type="InterPro" id="IPR023631">
    <property type="entry name" value="Amidase_dom"/>
</dbReference>
<dbReference type="InterPro" id="IPR036928">
    <property type="entry name" value="AS_sf"/>
</dbReference>
<dbReference type="InterPro" id="IPR004412">
    <property type="entry name" value="GatA"/>
</dbReference>
<dbReference type="NCBIfam" id="TIGR00132">
    <property type="entry name" value="gatA"/>
    <property type="match status" value="1"/>
</dbReference>
<dbReference type="PANTHER" id="PTHR11895:SF151">
    <property type="entry name" value="GLUTAMYL-TRNA(GLN) AMIDOTRANSFERASE SUBUNIT A"/>
    <property type="match status" value="1"/>
</dbReference>
<dbReference type="PANTHER" id="PTHR11895">
    <property type="entry name" value="TRANSAMIDASE"/>
    <property type="match status" value="1"/>
</dbReference>
<dbReference type="Pfam" id="PF01425">
    <property type="entry name" value="Amidase"/>
    <property type="match status" value="1"/>
</dbReference>
<dbReference type="SUPFAM" id="SSF75304">
    <property type="entry name" value="Amidase signature (AS) enzymes"/>
    <property type="match status" value="1"/>
</dbReference>
<dbReference type="PROSITE" id="PS00571">
    <property type="entry name" value="AMIDASES"/>
    <property type="match status" value="1"/>
</dbReference>
<feature type="chain" id="PRO_0000105143" description="Glutamyl-tRNA(Gln) amidotransferase subunit A">
    <location>
        <begin position="1"/>
        <end position="512"/>
    </location>
</feature>
<feature type="active site" description="Charge relay system" evidence="1">
    <location>
        <position position="82"/>
    </location>
</feature>
<feature type="active site" description="Charge relay system" evidence="1">
    <location>
        <position position="157"/>
    </location>
</feature>
<feature type="active site" description="Acyl-ester intermediate" evidence="1">
    <location>
        <position position="181"/>
    </location>
</feature>
<comment type="function">
    <text evidence="1">Allows the formation of correctly charged Gln-tRNA(Gln) through the transamidation of misacylated Glu-tRNA(Gln) in organisms which lack glutaminyl-tRNA synthetase. The reaction takes place in the presence of glutamine and ATP through an activated gamma-phospho-Glu-tRNA(Gln).</text>
</comment>
<comment type="catalytic activity">
    <reaction evidence="1">
        <text>L-glutamyl-tRNA(Gln) + L-glutamine + ATP + H2O = L-glutaminyl-tRNA(Gln) + L-glutamate + ADP + phosphate + H(+)</text>
        <dbReference type="Rhea" id="RHEA:17521"/>
        <dbReference type="Rhea" id="RHEA-COMP:9681"/>
        <dbReference type="Rhea" id="RHEA-COMP:9684"/>
        <dbReference type="ChEBI" id="CHEBI:15377"/>
        <dbReference type="ChEBI" id="CHEBI:15378"/>
        <dbReference type="ChEBI" id="CHEBI:29985"/>
        <dbReference type="ChEBI" id="CHEBI:30616"/>
        <dbReference type="ChEBI" id="CHEBI:43474"/>
        <dbReference type="ChEBI" id="CHEBI:58359"/>
        <dbReference type="ChEBI" id="CHEBI:78520"/>
        <dbReference type="ChEBI" id="CHEBI:78521"/>
        <dbReference type="ChEBI" id="CHEBI:456216"/>
        <dbReference type="EC" id="6.3.5.7"/>
    </reaction>
</comment>
<comment type="subunit">
    <text evidence="1">Heterotrimer of A, B and C subunits.</text>
</comment>
<comment type="similarity">
    <text evidence="1">Belongs to the amidase family. GatA subfamily.</text>
</comment>
<gene>
    <name evidence="1" type="primary">gatA</name>
    <name type="ordered locus">BP0372</name>
</gene>
<reference key="1">
    <citation type="journal article" date="2003" name="Nat. Genet.">
        <title>Comparative analysis of the genome sequences of Bordetella pertussis, Bordetella parapertussis and Bordetella bronchiseptica.</title>
        <authorList>
            <person name="Parkhill J."/>
            <person name="Sebaihia M."/>
            <person name="Preston A."/>
            <person name="Murphy L.D."/>
            <person name="Thomson N.R."/>
            <person name="Harris D.E."/>
            <person name="Holden M.T.G."/>
            <person name="Churcher C.M."/>
            <person name="Bentley S.D."/>
            <person name="Mungall K.L."/>
            <person name="Cerdeno-Tarraga A.-M."/>
            <person name="Temple L."/>
            <person name="James K.D."/>
            <person name="Harris B."/>
            <person name="Quail M.A."/>
            <person name="Achtman M."/>
            <person name="Atkin R."/>
            <person name="Baker S."/>
            <person name="Basham D."/>
            <person name="Bason N."/>
            <person name="Cherevach I."/>
            <person name="Chillingworth T."/>
            <person name="Collins M."/>
            <person name="Cronin A."/>
            <person name="Davis P."/>
            <person name="Doggett J."/>
            <person name="Feltwell T."/>
            <person name="Goble A."/>
            <person name="Hamlin N."/>
            <person name="Hauser H."/>
            <person name="Holroyd S."/>
            <person name="Jagels K."/>
            <person name="Leather S."/>
            <person name="Moule S."/>
            <person name="Norberczak H."/>
            <person name="O'Neil S."/>
            <person name="Ormond D."/>
            <person name="Price C."/>
            <person name="Rabbinowitsch E."/>
            <person name="Rutter S."/>
            <person name="Sanders M."/>
            <person name="Saunders D."/>
            <person name="Seeger K."/>
            <person name="Sharp S."/>
            <person name="Simmonds M."/>
            <person name="Skelton J."/>
            <person name="Squares R."/>
            <person name="Squares S."/>
            <person name="Stevens K."/>
            <person name="Unwin L."/>
            <person name="Whitehead S."/>
            <person name="Barrell B.G."/>
            <person name="Maskell D.J."/>
        </authorList>
    </citation>
    <scope>NUCLEOTIDE SEQUENCE [LARGE SCALE GENOMIC DNA]</scope>
    <source>
        <strain>Tohama I / ATCC BAA-589 / NCTC 13251</strain>
    </source>
</reference>
<keyword id="KW-0067">ATP-binding</keyword>
<keyword id="KW-0436">Ligase</keyword>
<keyword id="KW-0547">Nucleotide-binding</keyword>
<keyword id="KW-0648">Protein biosynthesis</keyword>
<keyword id="KW-1185">Reference proteome</keyword>
<protein>
    <recommendedName>
        <fullName evidence="1">Glutamyl-tRNA(Gln) amidotransferase subunit A</fullName>
        <shortName evidence="1">Glu-ADT subunit A</shortName>
        <ecNumber evidence="1">6.3.5.7</ecNumber>
    </recommendedName>
</protein>
<name>GATA_BORPE</name>
<organism>
    <name type="scientific">Bordetella pertussis (strain Tohama I / ATCC BAA-589 / NCTC 13251)</name>
    <dbReference type="NCBI Taxonomy" id="257313"/>
    <lineage>
        <taxon>Bacteria</taxon>
        <taxon>Pseudomonadati</taxon>
        <taxon>Pseudomonadota</taxon>
        <taxon>Betaproteobacteria</taxon>
        <taxon>Burkholderiales</taxon>
        <taxon>Alcaligenaceae</taxon>
        <taxon>Bordetella</taxon>
    </lineage>
</organism>